<evidence type="ECO:0000255" key="1">
    <source>
        <dbReference type="HAMAP-Rule" id="MF_01858"/>
    </source>
</evidence>
<sequence length="712" mass="81305">MTTQITYFATAARGFEEMLKTELEQICQAECKVTQGGVHFTTTQRGAYQALLHSRLASRILLPLVTTKIFSDLDLYATIVGINWAYIFDPRDTFFVDFNGTNREIRNTQFGAMRVKDGVVDYFERKGFTRPTVDKDHADIRIHVYLDRENMVVSLDLSGDALHMRGYREDTGKAPLRETLAAAIVLRSGWQKGTPLVDPMCGSGTLLIEAAQMQAGIAPQLHRKHWGFNAWKGHQQAVWKEVLEQAYLQQNEEIQPLFFGFDLDHRVLAKAKQNAKNAGVAHLIQWQQGDIAALKNPCPEQVGTVICNPPYGERLGTTPALIALYSVFGQRLKQQFSGWNASIFSGEPELLNCLRLRSHRQFKAKNGPLDCLQKNYQISERTAAEQQADELKFEQNAQVAPDFANRLAKNIKKIEKWAKQQGINAYRLYDADLPEYNLAVDRYDDHIVVQEYAAPKNIDEQKARQRLLDAVSATLYVTGVETNKLVLKVRQKQKGTNQYEKLANKGDYFYVTEYGAKLWVNLTDYLDTGLFLDHRLTRKMVGQMAKGKTFLNLFAYTGSATIHAALNGAKSTTTVDMSNTYLNWAEQNLELNNLPLRNNRLFQADCLQWLAECRERFELIFVDPPTFSNSKRMEDSWDVQRDHIKLMTQLKRILTTDGTIVFSNNKRGFKMDFEGLAELGLQAENISHKTLPLDFERNPQIHNCWIIRHIEN</sequence>
<gene>
    <name evidence="1" type="primary">rlmL</name>
    <name type="ordered locus">APL_0060</name>
</gene>
<dbReference type="EC" id="2.1.1.173" evidence="1"/>
<dbReference type="EC" id="2.1.1.264" evidence="1"/>
<dbReference type="EMBL" id="CP000569">
    <property type="protein sequence ID" value="ABN73168.1"/>
    <property type="molecule type" value="Genomic_DNA"/>
</dbReference>
<dbReference type="RefSeq" id="WP_009875501.1">
    <property type="nucleotide sequence ID" value="NC_009053.1"/>
</dbReference>
<dbReference type="SMR" id="A3MYD2"/>
<dbReference type="STRING" id="416269.APL_0060"/>
<dbReference type="EnsemblBacteria" id="ABN73168">
    <property type="protein sequence ID" value="ABN73168"/>
    <property type="gene ID" value="APL_0060"/>
</dbReference>
<dbReference type="KEGG" id="apl:APL_0060"/>
<dbReference type="PATRIC" id="fig|416269.6.peg.62"/>
<dbReference type="eggNOG" id="COG0116">
    <property type="taxonomic scope" value="Bacteria"/>
</dbReference>
<dbReference type="eggNOG" id="COG1092">
    <property type="taxonomic scope" value="Bacteria"/>
</dbReference>
<dbReference type="HOGENOM" id="CLU_014042_2_0_6"/>
<dbReference type="Proteomes" id="UP000001432">
    <property type="component" value="Chromosome"/>
</dbReference>
<dbReference type="GO" id="GO:0005737">
    <property type="term" value="C:cytoplasm"/>
    <property type="evidence" value="ECO:0007669"/>
    <property type="project" value="UniProtKB-SubCell"/>
</dbReference>
<dbReference type="GO" id="GO:0052915">
    <property type="term" value="F:23S rRNA (guanine(2445)-N(2))-methyltransferase activity"/>
    <property type="evidence" value="ECO:0007669"/>
    <property type="project" value="UniProtKB-UniRule"/>
</dbReference>
<dbReference type="GO" id="GO:0003723">
    <property type="term" value="F:RNA binding"/>
    <property type="evidence" value="ECO:0007669"/>
    <property type="project" value="UniProtKB-KW"/>
</dbReference>
<dbReference type="GO" id="GO:0070043">
    <property type="term" value="F:rRNA (guanine-N7-)-methyltransferase activity"/>
    <property type="evidence" value="ECO:0007669"/>
    <property type="project" value="UniProtKB-UniRule"/>
</dbReference>
<dbReference type="CDD" id="cd02440">
    <property type="entry name" value="AdoMet_MTases"/>
    <property type="match status" value="1"/>
</dbReference>
<dbReference type="CDD" id="cd11715">
    <property type="entry name" value="THUMP_AdoMetMT"/>
    <property type="match status" value="1"/>
</dbReference>
<dbReference type="FunFam" id="3.30.750.80:FF:000001">
    <property type="entry name" value="Ribosomal RNA large subunit methyltransferase K/L"/>
    <property type="match status" value="1"/>
</dbReference>
<dbReference type="FunFam" id="3.40.50.150:FF:000039">
    <property type="entry name" value="Ribosomal RNA large subunit methyltransferase K/L"/>
    <property type="match status" value="1"/>
</dbReference>
<dbReference type="Gene3D" id="3.30.2130.30">
    <property type="match status" value="1"/>
</dbReference>
<dbReference type="Gene3D" id="3.30.750.80">
    <property type="entry name" value="RNA methyltransferase domain (HRMD) like"/>
    <property type="match status" value="1"/>
</dbReference>
<dbReference type="Gene3D" id="3.40.50.150">
    <property type="entry name" value="Vaccinia Virus protein VP39"/>
    <property type="match status" value="2"/>
</dbReference>
<dbReference type="HAMAP" id="MF_01858">
    <property type="entry name" value="23SrRNA_methyltr_KL"/>
    <property type="match status" value="1"/>
</dbReference>
<dbReference type="InterPro" id="IPR017244">
    <property type="entry name" value="23SrRNA_methyltr_KL"/>
</dbReference>
<dbReference type="InterPro" id="IPR002052">
    <property type="entry name" value="DNA_methylase_N6_adenine_CS"/>
</dbReference>
<dbReference type="InterPro" id="IPR000241">
    <property type="entry name" value="RlmKL-like_Mtase"/>
</dbReference>
<dbReference type="InterPro" id="IPR053943">
    <property type="entry name" value="RlmKL-like_Mtase_CS"/>
</dbReference>
<dbReference type="InterPro" id="IPR054170">
    <property type="entry name" value="RlmL_1st"/>
</dbReference>
<dbReference type="InterPro" id="IPR019614">
    <property type="entry name" value="SAM-dep_methyl-trfase"/>
</dbReference>
<dbReference type="InterPro" id="IPR029063">
    <property type="entry name" value="SAM-dependent_MTases_sf"/>
</dbReference>
<dbReference type="InterPro" id="IPR004114">
    <property type="entry name" value="THUMP_dom"/>
</dbReference>
<dbReference type="NCBIfam" id="NF008748">
    <property type="entry name" value="PRK11783.1"/>
    <property type="match status" value="1"/>
</dbReference>
<dbReference type="PANTHER" id="PTHR47313">
    <property type="entry name" value="RIBOSOMAL RNA LARGE SUBUNIT METHYLTRANSFERASE K/L"/>
    <property type="match status" value="1"/>
</dbReference>
<dbReference type="PANTHER" id="PTHR47313:SF1">
    <property type="entry name" value="RIBOSOMAL RNA LARGE SUBUNIT METHYLTRANSFERASE K_L"/>
    <property type="match status" value="1"/>
</dbReference>
<dbReference type="Pfam" id="PF10672">
    <property type="entry name" value="Methyltrans_SAM"/>
    <property type="match status" value="1"/>
</dbReference>
<dbReference type="Pfam" id="PF22020">
    <property type="entry name" value="RlmL_1st"/>
    <property type="match status" value="1"/>
</dbReference>
<dbReference type="Pfam" id="PF02926">
    <property type="entry name" value="THUMP"/>
    <property type="match status" value="1"/>
</dbReference>
<dbReference type="Pfam" id="PF01170">
    <property type="entry name" value="UPF0020"/>
    <property type="match status" value="1"/>
</dbReference>
<dbReference type="PIRSF" id="PIRSF037618">
    <property type="entry name" value="RNA_Mtase_bacteria_prd"/>
    <property type="match status" value="1"/>
</dbReference>
<dbReference type="SMART" id="SM00981">
    <property type="entry name" value="THUMP"/>
    <property type="match status" value="1"/>
</dbReference>
<dbReference type="SUPFAM" id="SSF53335">
    <property type="entry name" value="S-adenosyl-L-methionine-dependent methyltransferases"/>
    <property type="match status" value="2"/>
</dbReference>
<dbReference type="PROSITE" id="PS51165">
    <property type="entry name" value="THUMP"/>
    <property type="match status" value="1"/>
</dbReference>
<dbReference type="PROSITE" id="PS01261">
    <property type="entry name" value="UPF0020"/>
    <property type="match status" value="1"/>
</dbReference>
<accession>A3MYD2</accession>
<feature type="chain" id="PRO_0000366719" description="Ribosomal RNA large subunit methyltransferase K/L">
    <location>
        <begin position="1"/>
        <end position="712"/>
    </location>
</feature>
<feature type="domain" description="THUMP" evidence="1">
    <location>
        <begin position="46"/>
        <end position="157"/>
    </location>
</feature>
<comment type="function">
    <text evidence="1">Specifically methylates the guanine in position 2445 (m2G2445) and the guanine in position 2069 (m7G2069) of 23S rRNA.</text>
</comment>
<comment type="catalytic activity">
    <reaction evidence="1">
        <text>guanosine(2445) in 23S rRNA + S-adenosyl-L-methionine = N(2)-methylguanosine(2445) in 23S rRNA + S-adenosyl-L-homocysteine + H(+)</text>
        <dbReference type="Rhea" id="RHEA:42740"/>
        <dbReference type="Rhea" id="RHEA-COMP:10215"/>
        <dbReference type="Rhea" id="RHEA-COMP:10216"/>
        <dbReference type="ChEBI" id="CHEBI:15378"/>
        <dbReference type="ChEBI" id="CHEBI:57856"/>
        <dbReference type="ChEBI" id="CHEBI:59789"/>
        <dbReference type="ChEBI" id="CHEBI:74269"/>
        <dbReference type="ChEBI" id="CHEBI:74481"/>
        <dbReference type="EC" id="2.1.1.173"/>
    </reaction>
</comment>
<comment type="catalytic activity">
    <reaction evidence="1">
        <text>guanosine(2069) in 23S rRNA + S-adenosyl-L-methionine = N(2)-methylguanosine(2069) in 23S rRNA + S-adenosyl-L-homocysteine + H(+)</text>
        <dbReference type="Rhea" id="RHEA:43772"/>
        <dbReference type="Rhea" id="RHEA-COMP:10688"/>
        <dbReference type="Rhea" id="RHEA-COMP:10689"/>
        <dbReference type="ChEBI" id="CHEBI:15378"/>
        <dbReference type="ChEBI" id="CHEBI:57856"/>
        <dbReference type="ChEBI" id="CHEBI:59789"/>
        <dbReference type="ChEBI" id="CHEBI:74269"/>
        <dbReference type="ChEBI" id="CHEBI:74481"/>
        <dbReference type="EC" id="2.1.1.264"/>
    </reaction>
</comment>
<comment type="subcellular location">
    <subcellularLocation>
        <location evidence="1">Cytoplasm</location>
    </subcellularLocation>
</comment>
<comment type="similarity">
    <text evidence="1">Belongs to the methyltransferase superfamily. RlmKL family.</text>
</comment>
<keyword id="KW-0963">Cytoplasm</keyword>
<keyword id="KW-0489">Methyltransferase</keyword>
<keyword id="KW-1185">Reference proteome</keyword>
<keyword id="KW-0694">RNA-binding</keyword>
<keyword id="KW-0698">rRNA processing</keyword>
<keyword id="KW-0949">S-adenosyl-L-methionine</keyword>
<keyword id="KW-0808">Transferase</keyword>
<organism>
    <name type="scientific">Actinobacillus pleuropneumoniae serotype 5b (strain L20)</name>
    <dbReference type="NCBI Taxonomy" id="416269"/>
    <lineage>
        <taxon>Bacteria</taxon>
        <taxon>Pseudomonadati</taxon>
        <taxon>Pseudomonadota</taxon>
        <taxon>Gammaproteobacteria</taxon>
        <taxon>Pasteurellales</taxon>
        <taxon>Pasteurellaceae</taxon>
        <taxon>Actinobacillus</taxon>
    </lineage>
</organism>
<protein>
    <recommendedName>
        <fullName evidence="1">Ribosomal RNA large subunit methyltransferase K/L</fullName>
    </recommendedName>
    <domain>
        <recommendedName>
            <fullName evidence="1">23S rRNA m2G2445 methyltransferase</fullName>
            <ecNumber evidence="1">2.1.1.173</ecNumber>
        </recommendedName>
        <alternativeName>
            <fullName evidence="1">rRNA (guanine-N(2)-)-methyltransferase RlmL</fullName>
        </alternativeName>
    </domain>
    <domain>
        <recommendedName>
            <fullName evidence="1">23S rRNA m7G2069 methyltransferase</fullName>
            <ecNumber evidence="1">2.1.1.264</ecNumber>
        </recommendedName>
        <alternativeName>
            <fullName evidence="1">rRNA (guanine-N(7)-)-methyltransferase RlmK</fullName>
        </alternativeName>
    </domain>
</protein>
<proteinExistence type="inferred from homology"/>
<reference key="1">
    <citation type="journal article" date="2008" name="J. Bacteriol.">
        <title>The complete genome sequence of Actinobacillus pleuropneumoniae L20 (serotype 5b).</title>
        <authorList>
            <person name="Foote S.J."/>
            <person name="Bosse J.T."/>
            <person name="Bouevitch A.B."/>
            <person name="Langford P.R."/>
            <person name="Young N.M."/>
            <person name="Nash J.H.E."/>
        </authorList>
    </citation>
    <scope>NUCLEOTIDE SEQUENCE [LARGE SCALE GENOMIC DNA]</scope>
    <source>
        <strain>L20</strain>
    </source>
</reference>
<name>RLMKL_ACTP2</name>